<organism>
    <name type="scientific">Mycoplasma genitalium (strain ATCC 33530 / DSM 19775 / NCTC 10195 / G37)</name>
    <name type="common">Mycoplasmoides genitalium</name>
    <dbReference type="NCBI Taxonomy" id="243273"/>
    <lineage>
        <taxon>Bacteria</taxon>
        <taxon>Bacillati</taxon>
        <taxon>Mycoplasmatota</taxon>
        <taxon>Mycoplasmoidales</taxon>
        <taxon>Mycoplasmoidaceae</taxon>
        <taxon>Mycoplasmoides</taxon>
    </lineage>
</organism>
<accession>P47367</accession>
<comment type="subcellular location">
    <subcellularLocation>
        <location evidence="2">Cell membrane</location>
        <topology evidence="2">Multi-pass membrane protein</topology>
    </subcellularLocation>
</comment>
<name>Y121_MYCGE</name>
<reference key="1">
    <citation type="journal article" date="1995" name="Science">
        <title>The minimal gene complement of Mycoplasma genitalium.</title>
        <authorList>
            <person name="Fraser C.M."/>
            <person name="Gocayne J.D."/>
            <person name="White O."/>
            <person name="Adams M.D."/>
            <person name="Clayton R.A."/>
            <person name="Fleischmann R.D."/>
            <person name="Bult C.J."/>
            <person name="Kerlavage A.R."/>
            <person name="Sutton G.G."/>
            <person name="Kelley J.M."/>
            <person name="Fritchman J.L."/>
            <person name="Weidman J.F."/>
            <person name="Small K.V."/>
            <person name="Sandusky M."/>
            <person name="Fuhrmann J.L."/>
            <person name="Nguyen D.T."/>
            <person name="Utterback T.R."/>
            <person name="Saudek D.M."/>
            <person name="Phillips C.A."/>
            <person name="Merrick J.M."/>
            <person name="Tomb J.-F."/>
            <person name="Dougherty B.A."/>
            <person name="Bott K.F."/>
            <person name="Hu P.-C."/>
            <person name="Lucier T.S."/>
            <person name="Peterson S.N."/>
            <person name="Smith H.O."/>
            <person name="Hutchison C.A. III"/>
            <person name="Venter J.C."/>
        </authorList>
    </citation>
    <scope>NUCLEOTIDE SEQUENCE [LARGE SCALE GENOMIC DNA]</scope>
    <source>
        <strain>ATCC 33530 / DSM 19775 / NCTC 10195 / G37</strain>
    </source>
</reference>
<protein>
    <recommendedName>
        <fullName>Uncharacterized protein MG121</fullName>
    </recommendedName>
</protein>
<dbReference type="EMBL" id="L43967">
    <property type="protein sequence ID" value="AAC71339.1"/>
    <property type="molecule type" value="Genomic_DNA"/>
</dbReference>
<dbReference type="PIR" id="D64213">
    <property type="entry name" value="D64213"/>
</dbReference>
<dbReference type="RefSeq" id="WP_009885677.1">
    <property type="nucleotide sequence ID" value="NC_000908.2"/>
</dbReference>
<dbReference type="FunCoup" id="P47367">
    <property type="interactions" value="52"/>
</dbReference>
<dbReference type="STRING" id="243273.MG_121"/>
<dbReference type="GeneID" id="88282245"/>
<dbReference type="KEGG" id="mge:MG_121"/>
<dbReference type="eggNOG" id="COG1079">
    <property type="taxonomic scope" value="Bacteria"/>
</dbReference>
<dbReference type="HOGENOM" id="CLU_040769_1_2_14"/>
<dbReference type="InParanoid" id="P47367"/>
<dbReference type="OrthoDB" id="9792579at2"/>
<dbReference type="BioCyc" id="MGEN243273:G1GJ2-134-MONOMER"/>
<dbReference type="Proteomes" id="UP000000807">
    <property type="component" value="Chromosome"/>
</dbReference>
<dbReference type="GO" id="GO:0005886">
    <property type="term" value="C:plasma membrane"/>
    <property type="evidence" value="ECO:0007669"/>
    <property type="project" value="UniProtKB-SubCell"/>
</dbReference>
<dbReference type="GO" id="GO:0022857">
    <property type="term" value="F:transmembrane transporter activity"/>
    <property type="evidence" value="ECO:0007669"/>
    <property type="project" value="InterPro"/>
</dbReference>
<dbReference type="CDD" id="cd06580">
    <property type="entry name" value="TM_PBP1_transp_TpRbsC_like"/>
    <property type="match status" value="1"/>
</dbReference>
<dbReference type="InterPro" id="IPR001851">
    <property type="entry name" value="ABC_transp_permease"/>
</dbReference>
<dbReference type="PANTHER" id="PTHR43370:SF1">
    <property type="entry name" value="GUANOSINE ABC TRANSPORTER PERMEASE PROTEIN NUPQ"/>
    <property type="match status" value="1"/>
</dbReference>
<dbReference type="PANTHER" id="PTHR43370">
    <property type="entry name" value="SUGAR ABC TRANSPORTER INTEGRAL MEMBRANE PROTEIN-RELATED"/>
    <property type="match status" value="1"/>
</dbReference>
<dbReference type="Pfam" id="PF02653">
    <property type="entry name" value="BPD_transp_2"/>
    <property type="match status" value="1"/>
</dbReference>
<proteinExistence type="predicted"/>
<evidence type="ECO:0000255" key="1"/>
<evidence type="ECO:0000305" key="2"/>
<keyword id="KW-1003">Cell membrane</keyword>
<keyword id="KW-0472">Membrane</keyword>
<keyword id="KW-1185">Reference proteome</keyword>
<keyword id="KW-0812">Transmembrane</keyword>
<keyword id="KW-1133">Transmembrane helix</keyword>
<sequence length="306" mass="33299">MLSLAQLESWFFIAPALLLAVLSGYLAERVGIINIAINGGMVFGGLFMALLSYGFTNNLNQSAPSWSLFITIPLSVLFSSVIGCLFALAAVKLRADHVIVGTGINLLASGITLFISQNAASLFSDTTLRVRYLFPIQTTVSIEAIGVFVFSLLLIGFVWYLMSFTKTGLRYRAVGENPNVIDTQGISVYKYQWIGAICSMMVAGLSGSLFVLSVSNFPFNSGDVNGLGFIAIAIMIISMWRIIPSIFIGLIFAYAYVFTNSQIGSNSNSYLLRTIPFIISLLVMLLFGFLNVAPKNIGKHFDKGLR</sequence>
<gene>
    <name type="ordered locus">MG121</name>
</gene>
<feature type="chain" id="PRO_0000210425" description="Uncharacterized protein MG121">
    <location>
        <begin position="1"/>
        <end position="306"/>
    </location>
</feature>
<feature type="transmembrane region" description="Helical" evidence="1">
    <location>
        <begin position="7"/>
        <end position="27"/>
    </location>
</feature>
<feature type="transmembrane region" description="Helical" evidence="1">
    <location>
        <begin position="30"/>
        <end position="50"/>
    </location>
</feature>
<feature type="transmembrane region" description="Helical" evidence="1">
    <location>
        <begin position="68"/>
        <end position="88"/>
    </location>
</feature>
<feature type="transmembrane region" description="Helical" evidence="1">
    <location>
        <begin position="95"/>
        <end position="115"/>
    </location>
</feature>
<feature type="transmembrane region" description="Helical" evidence="1">
    <location>
        <begin position="144"/>
        <end position="164"/>
    </location>
</feature>
<feature type="transmembrane region" description="Helical" evidence="1">
    <location>
        <begin position="194"/>
        <end position="214"/>
    </location>
</feature>
<feature type="transmembrane region" description="Helical" evidence="1">
    <location>
        <begin position="232"/>
        <end position="252"/>
    </location>
</feature>
<feature type="transmembrane region" description="Helical" evidence="1">
    <location>
        <begin position="274"/>
        <end position="294"/>
    </location>
</feature>